<sequence>MANVHVINHPLVQHKLTIIRDKNTGTKAFRELVDEVATLMAYEITRDMELEDIQVETPLQTTTAKTLTGKKLGIVPILRAGLGMQDGILKLIPAAKVGHVGLYRDHDTLEPVEYFVKLPSDVEERLFIVVDPMLATGGSAIMAIDCLKKRGARNMKFMCLVAAPEGVKALQDAHPDVEIYVAGLDEKLDENGYIRPGLGDAGDRLFGTK</sequence>
<gene>
    <name evidence="1" type="primary">upp</name>
    <name type="ordered locus">Lm4b_02507</name>
</gene>
<organism>
    <name type="scientific">Listeria monocytogenes serotype 4b (strain CLIP80459)</name>
    <dbReference type="NCBI Taxonomy" id="568819"/>
    <lineage>
        <taxon>Bacteria</taxon>
        <taxon>Bacillati</taxon>
        <taxon>Bacillota</taxon>
        <taxon>Bacilli</taxon>
        <taxon>Bacillales</taxon>
        <taxon>Listeriaceae</taxon>
        <taxon>Listeria</taxon>
    </lineage>
</organism>
<name>UPP_LISMC</name>
<comment type="function">
    <text evidence="1">Catalyzes the conversion of uracil and 5-phospho-alpha-D-ribose 1-diphosphate (PRPP) to UMP and diphosphate.</text>
</comment>
<comment type="catalytic activity">
    <reaction evidence="1">
        <text>UMP + diphosphate = 5-phospho-alpha-D-ribose 1-diphosphate + uracil</text>
        <dbReference type="Rhea" id="RHEA:13017"/>
        <dbReference type="ChEBI" id="CHEBI:17568"/>
        <dbReference type="ChEBI" id="CHEBI:33019"/>
        <dbReference type="ChEBI" id="CHEBI:57865"/>
        <dbReference type="ChEBI" id="CHEBI:58017"/>
        <dbReference type="EC" id="2.4.2.9"/>
    </reaction>
</comment>
<comment type="cofactor">
    <cofactor evidence="1">
        <name>Mg(2+)</name>
        <dbReference type="ChEBI" id="CHEBI:18420"/>
    </cofactor>
    <text evidence="1">Binds 1 Mg(2+) ion per subunit. The magnesium is bound as Mg-PRPP.</text>
</comment>
<comment type="activity regulation">
    <text evidence="1">Allosterically activated by GTP.</text>
</comment>
<comment type="pathway">
    <text evidence="1">Pyrimidine metabolism; UMP biosynthesis via salvage pathway; UMP from uracil: step 1/1.</text>
</comment>
<comment type="similarity">
    <text evidence="1">Belongs to the UPRTase family.</text>
</comment>
<dbReference type="EC" id="2.4.2.9" evidence="1"/>
<dbReference type="EMBL" id="FM242711">
    <property type="protein sequence ID" value="CAS06262.1"/>
    <property type="molecule type" value="Genomic_DNA"/>
</dbReference>
<dbReference type="RefSeq" id="WP_003723470.1">
    <property type="nucleotide sequence ID" value="NC_012488.1"/>
</dbReference>
<dbReference type="SMR" id="C1KYV5"/>
<dbReference type="GeneID" id="61190406"/>
<dbReference type="KEGG" id="lmc:Lm4b_02507"/>
<dbReference type="HOGENOM" id="CLU_067096_2_2_9"/>
<dbReference type="UniPathway" id="UPA00574">
    <property type="reaction ID" value="UER00636"/>
</dbReference>
<dbReference type="GO" id="GO:0005525">
    <property type="term" value="F:GTP binding"/>
    <property type="evidence" value="ECO:0007669"/>
    <property type="project" value="UniProtKB-KW"/>
</dbReference>
<dbReference type="GO" id="GO:0000287">
    <property type="term" value="F:magnesium ion binding"/>
    <property type="evidence" value="ECO:0007669"/>
    <property type="project" value="UniProtKB-UniRule"/>
</dbReference>
<dbReference type="GO" id="GO:0004845">
    <property type="term" value="F:uracil phosphoribosyltransferase activity"/>
    <property type="evidence" value="ECO:0007669"/>
    <property type="project" value="UniProtKB-UniRule"/>
</dbReference>
<dbReference type="GO" id="GO:0044206">
    <property type="term" value="P:UMP salvage"/>
    <property type="evidence" value="ECO:0007669"/>
    <property type="project" value="UniProtKB-UniRule"/>
</dbReference>
<dbReference type="GO" id="GO:0006223">
    <property type="term" value="P:uracil salvage"/>
    <property type="evidence" value="ECO:0007669"/>
    <property type="project" value="InterPro"/>
</dbReference>
<dbReference type="CDD" id="cd06223">
    <property type="entry name" value="PRTases_typeI"/>
    <property type="match status" value="1"/>
</dbReference>
<dbReference type="FunFam" id="3.40.50.2020:FF:000003">
    <property type="entry name" value="Uracil phosphoribosyltransferase"/>
    <property type="match status" value="1"/>
</dbReference>
<dbReference type="Gene3D" id="3.40.50.2020">
    <property type="match status" value="1"/>
</dbReference>
<dbReference type="HAMAP" id="MF_01218_B">
    <property type="entry name" value="Upp_B"/>
    <property type="match status" value="1"/>
</dbReference>
<dbReference type="InterPro" id="IPR000836">
    <property type="entry name" value="PRibTrfase_dom"/>
</dbReference>
<dbReference type="InterPro" id="IPR029057">
    <property type="entry name" value="PRTase-like"/>
</dbReference>
<dbReference type="InterPro" id="IPR034332">
    <property type="entry name" value="Upp_B"/>
</dbReference>
<dbReference type="InterPro" id="IPR050054">
    <property type="entry name" value="UPRTase/APRTase"/>
</dbReference>
<dbReference type="InterPro" id="IPR005765">
    <property type="entry name" value="Ura_phspho_trans"/>
</dbReference>
<dbReference type="NCBIfam" id="NF001097">
    <property type="entry name" value="PRK00129.1"/>
    <property type="match status" value="1"/>
</dbReference>
<dbReference type="NCBIfam" id="TIGR01091">
    <property type="entry name" value="upp"/>
    <property type="match status" value="1"/>
</dbReference>
<dbReference type="PANTHER" id="PTHR32315">
    <property type="entry name" value="ADENINE PHOSPHORIBOSYLTRANSFERASE"/>
    <property type="match status" value="1"/>
</dbReference>
<dbReference type="PANTHER" id="PTHR32315:SF4">
    <property type="entry name" value="URACIL PHOSPHORIBOSYLTRANSFERASE, CHLOROPLASTIC"/>
    <property type="match status" value="1"/>
</dbReference>
<dbReference type="Pfam" id="PF14681">
    <property type="entry name" value="UPRTase"/>
    <property type="match status" value="1"/>
</dbReference>
<dbReference type="SUPFAM" id="SSF53271">
    <property type="entry name" value="PRTase-like"/>
    <property type="match status" value="1"/>
</dbReference>
<keyword id="KW-0021">Allosteric enzyme</keyword>
<keyword id="KW-0328">Glycosyltransferase</keyword>
<keyword id="KW-0342">GTP-binding</keyword>
<keyword id="KW-0460">Magnesium</keyword>
<keyword id="KW-0547">Nucleotide-binding</keyword>
<keyword id="KW-0808">Transferase</keyword>
<feature type="chain" id="PRO_1000213935" description="Uracil phosphoribosyltransferase">
    <location>
        <begin position="1"/>
        <end position="209"/>
    </location>
</feature>
<feature type="binding site" evidence="1">
    <location>
        <position position="79"/>
    </location>
    <ligand>
        <name>5-phospho-alpha-D-ribose 1-diphosphate</name>
        <dbReference type="ChEBI" id="CHEBI:58017"/>
    </ligand>
</feature>
<feature type="binding site" evidence="1">
    <location>
        <position position="104"/>
    </location>
    <ligand>
        <name>5-phospho-alpha-D-ribose 1-diphosphate</name>
        <dbReference type="ChEBI" id="CHEBI:58017"/>
    </ligand>
</feature>
<feature type="binding site" evidence="1">
    <location>
        <begin position="131"/>
        <end position="139"/>
    </location>
    <ligand>
        <name>5-phospho-alpha-D-ribose 1-diphosphate</name>
        <dbReference type="ChEBI" id="CHEBI:58017"/>
    </ligand>
</feature>
<feature type="binding site" evidence="1">
    <location>
        <position position="194"/>
    </location>
    <ligand>
        <name>uracil</name>
        <dbReference type="ChEBI" id="CHEBI:17568"/>
    </ligand>
</feature>
<feature type="binding site" evidence="1">
    <location>
        <begin position="199"/>
        <end position="201"/>
    </location>
    <ligand>
        <name>uracil</name>
        <dbReference type="ChEBI" id="CHEBI:17568"/>
    </ligand>
</feature>
<feature type="binding site" evidence="1">
    <location>
        <position position="200"/>
    </location>
    <ligand>
        <name>5-phospho-alpha-D-ribose 1-diphosphate</name>
        <dbReference type="ChEBI" id="CHEBI:58017"/>
    </ligand>
</feature>
<accession>C1KYV5</accession>
<protein>
    <recommendedName>
        <fullName evidence="1">Uracil phosphoribosyltransferase</fullName>
        <ecNumber evidence="1">2.4.2.9</ecNumber>
    </recommendedName>
    <alternativeName>
        <fullName evidence="1">UMP pyrophosphorylase</fullName>
    </alternativeName>
    <alternativeName>
        <fullName evidence="1">UPRTase</fullName>
    </alternativeName>
</protein>
<proteinExistence type="inferred from homology"/>
<reference key="1">
    <citation type="journal article" date="2012" name="BMC Genomics">
        <title>Comparative genomics and transcriptomics of lineages I, II, and III strains of Listeria monocytogenes.</title>
        <authorList>
            <person name="Hain T."/>
            <person name="Ghai R."/>
            <person name="Billion A."/>
            <person name="Kuenne C.T."/>
            <person name="Steinweg C."/>
            <person name="Izar B."/>
            <person name="Mohamed W."/>
            <person name="Mraheil M."/>
            <person name="Domann E."/>
            <person name="Schaffrath S."/>
            <person name="Karst U."/>
            <person name="Goesmann A."/>
            <person name="Oehm S."/>
            <person name="Puhler A."/>
            <person name="Merkl R."/>
            <person name="Vorwerk S."/>
            <person name="Glaser P."/>
            <person name="Garrido P."/>
            <person name="Rusniok C."/>
            <person name="Buchrieser C."/>
            <person name="Goebel W."/>
            <person name="Chakraborty T."/>
        </authorList>
    </citation>
    <scope>NUCLEOTIDE SEQUENCE [LARGE SCALE GENOMIC DNA]</scope>
    <source>
        <strain>CLIP80459</strain>
    </source>
</reference>
<evidence type="ECO:0000255" key="1">
    <source>
        <dbReference type="HAMAP-Rule" id="MF_01218"/>
    </source>
</evidence>